<dbReference type="EMBL" id="BA000022">
    <property type="protein sequence ID" value="BAA10818.1"/>
    <property type="molecule type" value="Genomic_DNA"/>
</dbReference>
<dbReference type="PIR" id="S75971">
    <property type="entry name" value="S75971"/>
</dbReference>
<dbReference type="SMR" id="Q55472"/>
<dbReference type="STRING" id="1148.gene:10500322"/>
<dbReference type="TCDB" id="3.A.1.1.32">
    <property type="family name" value="the atp-binding cassette (abc) superfamily"/>
</dbReference>
<dbReference type="PaxDb" id="1148-1001331"/>
<dbReference type="EnsemblBacteria" id="BAA10818">
    <property type="protein sequence ID" value="BAA10818"/>
    <property type="gene ID" value="BAA10818"/>
</dbReference>
<dbReference type="KEGG" id="syn:slr0530"/>
<dbReference type="eggNOG" id="COG1175">
    <property type="taxonomic scope" value="Bacteria"/>
</dbReference>
<dbReference type="InParanoid" id="Q55472"/>
<dbReference type="PhylomeDB" id="Q55472"/>
<dbReference type="Proteomes" id="UP000001425">
    <property type="component" value="Chromosome"/>
</dbReference>
<dbReference type="GO" id="GO:0005886">
    <property type="term" value="C:plasma membrane"/>
    <property type="evidence" value="ECO:0007669"/>
    <property type="project" value="UniProtKB-SubCell"/>
</dbReference>
<dbReference type="GO" id="GO:0055085">
    <property type="term" value="P:transmembrane transport"/>
    <property type="evidence" value="ECO:0007669"/>
    <property type="project" value="InterPro"/>
</dbReference>
<dbReference type="CDD" id="cd06261">
    <property type="entry name" value="TM_PBP2"/>
    <property type="match status" value="1"/>
</dbReference>
<dbReference type="Gene3D" id="1.10.3720.10">
    <property type="entry name" value="MetI-like"/>
    <property type="match status" value="1"/>
</dbReference>
<dbReference type="InterPro" id="IPR051393">
    <property type="entry name" value="ABC_transporter_permease"/>
</dbReference>
<dbReference type="InterPro" id="IPR000515">
    <property type="entry name" value="MetI-like"/>
</dbReference>
<dbReference type="InterPro" id="IPR035906">
    <property type="entry name" value="MetI-like_sf"/>
</dbReference>
<dbReference type="PANTHER" id="PTHR30193">
    <property type="entry name" value="ABC TRANSPORTER PERMEASE PROTEIN"/>
    <property type="match status" value="1"/>
</dbReference>
<dbReference type="PANTHER" id="PTHR30193:SF18">
    <property type="entry name" value="OSMOPROTECTIVE COMPOUNDS UPTAKE PERMEASE PROTEIN GGTC"/>
    <property type="match status" value="1"/>
</dbReference>
<dbReference type="Pfam" id="PF00528">
    <property type="entry name" value="BPD_transp_1"/>
    <property type="match status" value="1"/>
</dbReference>
<dbReference type="SUPFAM" id="SSF161098">
    <property type="entry name" value="MetI-like"/>
    <property type="match status" value="1"/>
</dbReference>
<dbReference type="PROSITE" id="PS50928">
    <property type="entry name" value="ABC_TM1"/>
    <property type="match status" value="1"/>
</dbReference>
<evidence type="ECO:0000255" key="1"/>
<evidence type="ECO:0000255" key="2">
    <source>
        <dbReference type="PROSITE-ProRule" id="PRU00441"/>
    </source>
</evidence>
<evidence type="ECO:0000269" key="3">
    <source>
    </source>
</evidence>
<evidence type="ECO:0000303" key="4">
    <source>
    </source>
</evidence>
<evidence type="ECO:0000305" key="5"/>
<evidence type="ECO:0000305" key="6">
    <source>
    </source>
</evidence>
<evidence type="ECO:0000312" key="7">
    <source>
        <dbReference type="EMBL" id="BAA10818.1"/>
    </source>
</evidence>
<gene>
    <name evidence="4" type="primary">ggtC</name>
    <name evidence="7" type="ordered locus">slr0530</name>
</gene>
<comment type="function">
    <text evidence="3 5">Part of the ABC transporter complex GgtABCD involved in the uptake of the osmoprotective compounds glucosylglycerol (GG), sucrose and trehalose (PubMed:11081796). Responsible for the translocation of the substrate across the membrane (Probable).</text>
</comment>
<comment type="subunit">
    <text evidence="6">The complex is composed of two ATP-binding proteins (GgtA), two transmembrane proteins (GgtC and GgtD) and a solute-binding protein (GgtB).</text>
</comment>
<comment type="subcellular location">
    <subcellularLocation>
        <location evidence="5">Cell membrane</location>
        <topology evidence="1">Multi-pass membrane protein</topology>
    </subcellularLocation>
</comment>
<comment type="induction">
    <text evidence="3">Expression is very low in cells grown in basal medium but increases significantly after a salt shock.</text>
</comment>
<comment type="disruption phenotype">
    <text evidence="3">Inactivation of the gene results in loss of the ability to take up glucosylglycerol and sucrose, as well as to accumulate exogenous trehalose. Insertion causes leakage of glucosylglycerol from the cells into the medium.</text>
</comment>
<comment type="similarity">
    <text evidence="5">Belongs to the binding-protein-dependent transport system permease family.</text>
</comment>
<organism>
    <name type="scientific">Synechocystis sp. (strain ATCC 27184 / PCC 6803 / Kazusa)</name>
    <dbReference type="NCBI Taxonomy" id="1111708"/>
    <lineage>
        <taxon>Bacteria</taxon>
        <taxon>Bacillati</taxon>
        <taxon>Cyanobacteriota</taxon>
        <taxon>Cyanophyceae</taxon>
        <taxon>Synechococcales</taxon>
        <taxon>Merismopediaceae</taxon>
        <taxon>Synechocystis</taxon>
    </lineage>
</organism>
<reference key="1">
    <citation type="journal article" date="1996" name="DNA Res.">
        <title>Sequence analysis of the genome of the unicellular cyanobacterium Synechocystis sp. strain PCC6803. II. Sequence determination of the entire genome and assignment of potential protein-coding regions.</title>
        <authorList>
            <person name="Kaneko T."/>
            <person name="Sato S."/>
            <person name="Kotani H."/>
            <person name="Tanaka A."/>
            <person name="Asamizu E."/>
            <person name="Nakamura Y."/>
            <person name="Miyajima N."/>
            <person name="Hirosawa M."/>
            <person name="Sugiura M."/>
            <person name="Sasamoto S."/>
            <person name="Kimura T."/>
            <person name="Hosouchi T."/>
            <person name="Matsuno A."/>
            <person name="Muraki A."/>
            <person name="Nakazaki N."/>
            <person name="Naruo K."/>
            <person name="Okumura S."/>
            <person name="Shimpo S."/>
            <person name="Takeuchi C."/>
            <person name="Wada T."/>
            <person name="Watanabe A."/>
            <person name="Yamada M."/>
            <person name="Yasuda M."/>
            <person name="Tabata S."/>
        </authorList>
    </citation>
    <scope>NUCLEOTIDE SEQUENCE [LARGE SCALE GENOMIC DNA]</scope>
    <source>
        <strain>ATCC 27184 / PCC 6803 / Kazusa</strain>
    </source>
</reference>
<reference key="2">
    <citation type="journal article" date="2000" name="Arch. Microbiol.">
        <title>Molecular analysis of the ggtBCD gene cluster of Synechocystis sp. strain PCC6803 encoding subunits of an ABC transporter for osmoprotective compounds.</title>
        <authorList>
            <person name="Mikkat S."/>
            <person name="Hagemann M."/>
        </authorList>
    </citation>
    <scope>FUNCTION</scope>
    <scope>SUBUNIT</scope>
    <scope>INDUCTION</scope>
    <scope>DISRUPTION PHENOTYPE</scope>
</reference>
<name>GGTC_SYNY3</name>
<proteinExistence type="evidence at protein level"/>
<protein>
    <recommendedName>
        <fullName evidence="5">Osmoprotective compounds uptake permease protein GgtC</fullName>
    </recommendedName>
</protein>
<feature type="chain" id="PRO_0000449363" description="Osmoprotective compounds uptake permease protein GgtC">
    <location>
        <begin position="1"/>
        <end position="279"/>
    </location>
</feature>
<feature type="transmembrane region" description="Helical" evidence="1">
    <location>
        <begin position="7"/>
        <end position="27"/>
    </location>
</feature>
<feature type="transmembrane region" description="Helical" evidence="1 2">
    <location>
        <begin position="58"/>
        <end position="78"/>
    </location>
</feature>
<feature type="transmembrane region" description="Helical" evidence="1 2">
    <location>
        <begin position="90"/>
        <end position="110"/>
    </location>
</feature>
<feature type="transmembrane region" description="Helical" evidence="1 2">
    <location>
        <begin position="120"/>
        <end position="140"/>
    </location>
</feature>
<feature type="transmembrane region" description="Helical" evidence="1 2">
    <location>
        <begin position="146"/>
        <end position="166"/>
    </location>
</feature>
<feature type="transmembrane region" description="Helical" evidence="1 2">
    <location>
        <begin position="202"/>
        <end position="222"/>
    </location>
</feature>
<feature type="transmembrane region" description="Helical" evidence="1 2">
    <location>
        <begin position="247"/>
        <end position="267"/>
    </location>
</feature>
<feature type="domain" description="ABC transmembrane type-1" evidence="2">
    <location>
        <begin position="53"/>
        <end position="270"/>
    </location>
</feature>
<keyword id="KW-1003">Cell membrane</keyword>
<keyword id="KW-0472">Membrane</keyword>
<keyword id="KW-1185">Reference proteome</keyword>
<keyword id="KW-0762">Sugar transport</keyword>
<keyword id="KW-0812">Transmembrane</keyword>
<keyword id="KW-1133">Transmembrane helix</keyword>
<keyword id="KW-0813">Transport</keyword>
<sequence>MYVTPALLFLSAYLILPTLETVYLSFFDGRSRNFVGLKNYVFAFTDHTMLVAFRNNLLWLVLVTGISVSLGLIIAVLVDKVRYEAIAKSIIFLPMAISFVGASVIWKFVYAYRPAGAEQIGLLNAIVTSLGFAPVGWLVERSVNNFALIAIMIWLYTGFCMVILSAAVKGIPADVIEAARIDGANSWQIFWRITIPMIRSTLLVVSTTMVILVLKVFDIVFVMTGGNQGTEVIASLMIKEMFNYRNFGRGSTIAVILLLLIVPVMITNIRRFKAQEKLR</sequence>
<accession>Q55472</accession>